<comment type="catalytic activity">
    <reaction>
        <text>Preferential cleavage: Arg-|-Xaa, Lys-|-Xaa.</text>
        <dbReference type="EC" id="3.4.21.4"/>
    </reaction>
</comment>
<comment type="cofactor">
    <cofactor>
        <name>Ca(2+)</name>
        <dbReference type="ChEBI" id="CHEBI:29108"/>
    </cofactor>
    <text>Binds 1 Ca(2+) ion per subunit.</text>
</comment>
<comment type="subunit">
    <text evidence="2">Interacts with SERPINA1.</text>
</comment>
<comment type="subcellular location">
    <subcellularLocation>
        <location>Secreted</location>
        <location>Extracellular space</location>
    </subcellularLocation>
</comment>
<comment type="miscellaneous">
    <text>This sequence represents the precursor of the major form of trypsin produced by the adult pancreas.</text>
</comment>
<comment type="similarity">
    <text evidence="4">Belongs to the peptidase S1 family.</text>
</comment>
<name>TRY1_RAT</name>
<accession>P00762</accession>
<reference key="1">
    <citation type="journal article" date="1982" name="J. Biol. Chem.">
        <title>Two similar but nonallelic rat pancreatic trypsinogens. Nucleotide sequences of the cloned cDNAs.</title>
        <authorList>
            <person name="MacDonald R.J."/>
            <person name="Stary S.J."/>
            <person name="Swift G.H."/>
        </authorList>
    </citation>
    <scope>NUCLEOTIDE SEQUENCE [GENOMIC DNA]</scope>
    <source>
        <strain>Sprague-Dawley</strain>
    </source>
</reference>
<reference key="2">
    <citation type="journal article" date="1984" name="J. Biol. Chem.">
        <title>Structure of two related rat pancreatic trypsin genes.</title>
        <authorList>
            <person name="Craik C.S."/>
            <person name="Choo Q.L."/>
            <person name="Swift G.H."/>
            <person name="Quinto C."/>
            <person name="MacDonald R.J."/>
            <person name="Rutter W.J."/>
        </authorList>
    </citation>
    <scope>NUCLEOTIDE SEQUENCE [GENOMIC DNA]</scope>
</reference>
<reference key="3">
    <citation type="submission" date="2009-01" db="UniProtKB">
        <authorList>
            <person name="Lubec G."/>
            <person name="Kang S.U."/>
            <person name="Lubec S."/>
            <person name="Chen W.-Q."/>
        </authorList>
    </citation>
    <scope>PROTEIN SEQUENCE OF 73-92 AND 96-112</scope>
    <scope>IDENTIFICATION BY MASS SPECTROMETRY</scope>
    <source>
        <strain>Sprague-Dawley</strain>
        <tissue>Brain</tissue>
        <tissue>Hippocampus</tissue>
    </source>
</reference>
<proteinExistence type="evidence at protein level"/>
<sequence>MSALLILALVGAAVAFPLEDDDKIVGGYTCPEHSVPYQVSLNSGYHFCGGSLINDQWVVSAAHCYKSRIQVRLGEHNINVLEGDEQFINAAKIIKHPNYSSWTLNNDIMLIKLSSPVKLNARVAPVALPSACAPAGTQCLISGWGNTLSNGVNNPDLLQCVDAPVLSQADCEAAYPGEITSSMICVGFLEGGKDSCQGDSGGPVVCNGQLQGIVSWGYGCALPDNPGVYTKVCNFVGWIQDTIAAN</sequence>
<protein>
    <recommendedName>
        <fullName evidence="5">Serine protease 1</fullName>
        <ecNumber>3.4.21.4</ecNumber>
    </recommendedName>
    <alternativeName>
        <fullName evidence="5">Anionic trypsin I</fullName>
    </alternativeName>
    <alternativeName>
        <fullName evidence="5">Anionic trypsin-1</fullName>
    </alternativeName>
    <alternativeName>
        <fullName>Beta-trypsin</fullName>
    </alternativeName>
    <alternativeName>
        <fullName>Cationic trypsinogen</fullName>
    </alternativeName>
    <alternativeName>
        <fullName evidence="5">Pretrypsinogen I</fullName>
    </alternativeName>
    <alternativeName>
        <fullName evidence="3">Trypsin I</fullName>
    </alternativeName>
    <alternativeName>
        <fullName>Trypsin-1</fullName>
    </alternativeName>
</protein>
<feature type="signal peptide" evidence="1">
    <location>
        <begin position="1"/>
        <end position="15"/>
    </location>
</feature>
<feature type="propeptide" id="PRO_0000028207" description="Activation peptide">
    <location>
        <begin position="16"/>
        <end position="23"/>
    </location>
</feature>
<feature type="chain" id="PRO_0000028208" description="Serine protease 1">
    <location>
        <begin position="24"/>
        <end position="246"/>
    </location>
</feature>
<feature type="domain" description="Peptidase S1" evidence="4">
    <location>
        <begin position="24"/>
        <end position="244"/>
    </location>
</feature>
<feature type="active site" description="Charge relay system">
    <location>
        <position position="63"/>
    </location>
</feature>
<feature type="active site" description="Charge relay system">
    <location>
        <position position="107"/>
    </location>
</feature>
<feature type="active site" description="Charge relay system">
    <location>
        <position position="200"/>
    </location>
</feature>
<feature type="binding site">
    <location>
        <position position="75"/>
    </location>
    <ligand>
        <name>Ca(2+)</name>
        <dbReference type="ChEBI" id="CHEBI:29108"/>
    </ligand>
</feature>
<feature type="binding site">
    <location>
        <position position="77"/>
    </location>
    <ligand>
        <name>Ca(2+)</name>
        <dbReference type="ChEBI" id="CHEBI:29108"/>
    </ligand>
</feature>
<feature type="binding site">
    <location>
        <position position="80"/>
    </location>
    <ligand>
        <name>Ca(2+)</name>
        <dbReference type="ChEBI" id="CHEBI:29108"/>
    </ligand>
</feature>
<feature type="binding site">
    <location>
        <position position="85"/>
    </location>
    <ligand>
        <name>Ca(2+)</name>
        <dbReference type="ChEBI" id="CHEBI:29108"/>
    </ligand>
</feature>
<feature type="site" description="Required for specificity">
    <location>
        <position position="194"/>
    </location>
</feature>
<feature type="disulfide bond" evidence="4">
    <location>
        <begin position="30"/>
        <end position="160"/>
    </location>
</feature>
<feature type="disulfide bond" evidence="4">
    <location>
        <begin position="48"/>
        <end position="64"/>
    </location>
</feature>
<feature type="disulfide bond" evidence="4">
    <location>
        <begin position="132"/>
        <end position="233"/>
    </location>
</feature>
<feature type="disulfide bond" evidence="4">
    <location>
        <begin position="139"/>
        <end position="206"/>
    </location>
</feature>
<feature type="disulfide bond" evidence="4">
    <location>
        <begin position="171"/>
        <end position="185"/>
    </location>
</feature>
<feature type="disulfide bond" evidence="4">
    <location>
        <begin position="196"/>
        <end position="220"/>
    </location>
</feature>
<dbReference type="EC" id="3.4.21.4"/>
<dbReference type="EMBL" id="V01273">
    <property type="protein sequence ID" value="CAA24580.1"/>
    <property type="molecule type" value="mRNA"/>
</dbReference>
<dbReference type="EMBL" id="J00778">
    <property type="protein sequence ID" value="AAA98518.1"/>
    <property type="molecule type" value="Genomic_DNA"/>
</dbReference>
<dbReference type="PIR" id="B22657">
    <property type="entry name" value="TRRT1"/>
</dbReference>
<dbReference type="RefSeq" id="NP_036767.1">
    <property type="nucleotide sequence ID" value="NM_012635.1"/>
</dbReference>
<dbReference type="SMR" id="P00762"/>
<dbReference type="BioGRID" id="246823">
    <property type="interactions" value="3"/>
</dbReference>
<dbReference type="FunCoup" id="P00762">
    <property type="interactions" value="138"/>
</dbReference>
<dbReference type="IntAct" id="P00762">
    <property type="interactions" value="1"/>
</dbReference>
<dbReference type="STRING" id="10116.ENSRNOP00000043068"/>
<dbReference type="BindingDB" id="P00762"/>
<dbReference type="ChEMBL" id="CHEMBL3638328"/>
<dbReference type="MEROPS" id="S01.094"/>
<dbReference type="iPTMnet" id="P00762"/>
<dbReference type="PhosphoSitePlus" id="P00762"/>
<dbReference type="jPOST" id="P00762"/>
<dbReference type="PaxDb" id="10116-ENSRNOP00000043068"/>
<dbReference type="Ensembl" id="ENSRNOT00000108811.1">
    <property type="protein sequence ID" value="ENSRNOP00000086707.1"/>
    <property type="gene ID" value="ENSRNOG00000063605.1"/>
</dbReference>
<dbReference type="GeneID" id="24691"/>
<dbReference type="KEGG" id="rno:24691"/>
<dbReference type="UCSC" id="RGD:3417">
    <property type="organism name" value="rat"/>
</dbReference>
<dbReference type="AGR" id="RGD:3417"/>
<dbReference type="CTD" id="5644"/>
<dbReference type="RGD" id="3417">
    <property type="gene designation" value="Prss1"/>
</dbReference>
<dbReference type="eggNOG" id="KOG3627">
    <property type="taxonomic scope" value="Eukaryota"/>
</dbReference>
<dbReference type="GeneTree" id="ENSGT01050000244883"/>
<dbReference type="HOGENOM" id="CLU_006842_7_0_1"/>
<dbReference type="InParanoid" id="P00762"/>
<dbReference type="OMA" id="VNGYINW"/>
<dbReference type="OrthoDB" id="10059102at2759"/>
<dbReference type="PhylomeDB" id="P00762"/>
<dbReference type="TreeFam" id="TF331065"/>
<dbReference type="Reactome" id="R-RNO-1462054">
    <property type="pathway name" value="Alpha-defensins"/>
</dbReference>
<dbReference type="Reactome" id="R-RNO-1592389">
    <property type="pathway name" value="Activation of Matrix Metalloproteinases"/>
</dbReference>
<dbReference type="Reactome" id="R-RNO-6798695">
    <property type="pathway name" value="Neutrophil degranulation"/>
</dbReference>
<dbReference type="Reactome" id="R-RNO-6803157">
    <property type="pathway name" value="Antimicrobial peptides"/>
</dbReference>
<dbReference type="PRO" id="PR:P00762"/>
<dbReference type="Proteomes" id="UP000002494">
    <property type="component" value="Chromosome 4"/>
</dbReference>
<dbReference type="Bgee" id="ENSRNOG00000032156">
    <property type="expression patterns" value="Expressed in pancreas and 11 other cell types or tissues"/>
</dbReference>
<dbReference type="GO" id="GO:0005615">
    <property type="term" value="C:extracellular space"/>
    <property type="evidence" value="ECO:0000314"/>
    <property type="project" value="RGD"/>
</dbReference>
<dbReference type="GO" id="GO:0046872">
    <property type="term" value="F:metal ion binding"/>
    <property type="evidence" value="ECO:0007669"/>
    <property type="project" value="UniProtKB-KW"/>
</dbReference>
<dbReference type="GO" id="GO:0004252">
    <property type="term" value="F:serine-type endopeptidase activity"/>
    <property type="evidence" value="ECO:0000318"/>
    <property type="project" value="GO_Central"/>
</dbReference>
<dbReference type="GO" id="GO:0007586">
    <property type="term" value="P:digestion"/>
    <property type="evidence" value="ECO:0007669"/>
    <property type="project" value="UniProtKB-KW"/>
</dbReference>
<dbReference type="GO" id="GO:0006508">
    <property type="term" value="P:proteolysis"/>
    <property type="evidence" value="ECO:0007669"/>
    <property type="project" value="UniProtKB-KW"/>
</dbReference>
<dbReference type="GO" id="GO:1905640">
    <property type="term" value="P:response to acetaldehyde"/>
    <property type="evidence" value="ECO:0000270"/>
    <property type="project" value="RGD"/>
</dbReference>
<dbReference type="GO" id="GO:0031000">
    <property type="term" value="P:response to caffeine"/>
    <property type="evidence" value="ECO:0000314"/>
    <property type="project" value="RGD"/>
</dbReference>
<dbReference type="GO" id="GO:0035094">
    <property type="term" value="P:response to nicotine"/>
    <property type="evidence" value="ECO:0000314"/>
    <property type="project" value="RGD"/>
</dbReference>
<dbReference type="GO" id="GO:0007584">
    <property type="term" value="P:response to nutrient"/>
    <property type="evidence" value="ECO:0000270"/>
    <property type="project" value="RGD"/>
</dbReference>
<dbReference type="CDD" id="cd00190">
    <property type="entry name" value="Tryp_SPc"/>
    <property type="match status" value="1"/>
</dbReference>
<dbReference type="FunFam" id="2.40.10.10:FF:000019">
    <property type="entry name" value="Anionic trypsin"/>
    <property type="match status" value="1"/>
</dbReference>
<dbReference type="FunFam" id="2.40.10.10:FF:000008">
    <property type="entry name" value="Cationic trypsin"/>
    <property type="match status" value="1"/>
</dbReference>
<dbReference type="Gene3D" id="2.40.10.10">
    <property type="entry name" value="Trypsin-like serine proteases"/>
    <property type="match status" value="2"/>
</dbReference>
<dbReference type="InterPro" id="IPR009003">
    <property type="entry name" value="Peptidase_S1_PA"/>
</dbReference>
<dbReference type="InterPro" id="IPR043504">
    <property type="entry name" value="Peptidase_S1_PA_chymotrypsin"/>
</dbReference>
<dbReference type="InterPro" id="IPR001314">
    <property type="entry name" value="Peptidase_S1A"/>
</dbReference>
<dbReference type="InterPro" id="IPR050127">
    <property type="entry name" value="Serine_Proteases_S1"/>
</dbReference>
<dbReference type="InterPro" id="IPR001254">
    <property type="entry name" value="Trypsin_dom"/>
</dbReference>
<dbReference type="InterPro" id="IPR018114">
    <property type="entry name" value="TRYPSIN_HIS"/>
</dbReference>
<dbReference type="InterPro" id="IPR033116">
    <property type="entry name" value="TRYPSIN_SER"/>
</dbReference>
<dbReference type="PANTHER" id="PTHR24264:SF57">
    <property type="entry name" value="TRYPSIN-2"/>
    <property type="match status" value="1"/>
</dbReference>
<dbReference type="PANTHER" id="PTHR24264">
    <property type="entry name" value="TRYPSIN-RELATED"/>
    <property type="match status" value="1"/>
</dbReference>
<dbReference type="Pfam" id="PF00089">
    <property type="entry name" value="Trypsin"/>
    <property type="match status" value="1"/>
</dbReference>
<dbReference type="PRINTS" id="PR00722">
    <property type="entry name" value="CHYMOTRYPSIN"/>
</dbReference>
<dbReference type="SMART" id="SM00020">
    <property type="entry name" value="Tryp_SPc"/>
    <property type="match status" value="1"/>
</dbReference>
<dbReference type="SUPFAM" id="SSF50494">
    <property type="entry name" value="Trypsin-like serine proteases"/>
    <property type="match status" value="1"/>
</dbReference>
<dbReference type="PROSITE" id="PS50240">
    <property type="entry name" value="TRYPSIN_DOM"/>
    <property type="match status" value="1"/>
</dbReference>
<dbReference type="PROSITE" id="PS00134">
    <property type="entry name" value="TRYPSIN_HIS"/>
    <property type="match status" value="1"/>
</dbReference>
<dbReference type="PROSITE" id="PS00135">
    <property type="entry name" value="TRYPSIN_SER"/>
    <property type="match status" value="1"/>
</dbReference>
<evidence type="ECO:0000250" key="1"/>
<evidence type="ECO:0000250" key="2">
    <source>
        <dbReference type="UniProtKB" id="P00760"/>
    </source>
</evidence>
<evidence type="ECO:0000250" key="3">
    <source>
        <dbReference type="UniProtKB" id="P07477"/>
    </source>
</evidence>
<evidence type="ECO:0000255" key="4">
    <source>
        <dbReference type="PROSITE-ProRule" id="PRU00274"/>
    </source>
</evidence>
<evidence type="ECO:0000312" key="5">
    <source>
        <dbReference type="RGD" id="3417"/>
    </source>
</evidence>
<gene>
    <name evidence="5" type="primary">Prss1</name>
    <name type="synonym">Trp1</name>
    <name evidence="3" type="synonym">Try1</name>
    <name type="synonym">Tryp1</name>
</gene>
<organism>
    <name type="scientific">Rattus norvegicus</name>
    <name type="common">Rat</name>
    <dbReference type="NCBI Taxonomy" id="10116"/>
    <lineage>
        <taxon>Eukaryota</taxon>
        <taxon>Metazoa</taxon>
        <taxon>Chordata</taxon>
        <taxon>Craniata</taxon>
        <taxon>Vertebrata</taxon>
        <taxon>Euteleostomi</taxon>
        <taxon>Mammalia</taxon>
        <taxon>Eutheria</taxon>
        <taxon>Euarchontoglires</taxon>
        <taxon>Glires</taxon>
        <taxon>Rodentia</taxon>
        <taxon>Myomorpha</taxon>
        <taxon>Muroidea</taxon>
        <taxon>Muridae</taxon>
        <taxon>Murinae</taxon>
        <taxon>Rattus</taxon>
    </lineage>
</organism>
<keyword id="KW-0106">Calcium</keyword>
<keyword id="KW-0222">Digestion</keyword>
<keyword id="KW-0903">Direct protein sequencing</keyword>
<keyword id="KW-1015">Disulfide bond</keyword>
<keyword id="KW-0378">Hydrolase</keyword>
<keyword id="KW-0479">Metal-binding</keyword>
<keyword id="KW-0645">Protease</keyword>
<keyword id="KW-1185">Reference proteome</keyword>
<keyword id="KW-0964">Secreted</keyword>
<keyword id="KW-0720">Serine protease</keyword>
<keyword id="KW-0732">Signal</keyword>
<keyword id="KW-0865">Zymogen</keyword>